<organism>
    <name type="scientific">Podospora anserina</name>
    <name type="common">Pleurage anserina</name>
    <dbReference type="NCBI Taxonomy" id="2587412"/>
    <lineage>
        <taxon>Eukaryota</taxon>
        <taxon>Fungi</taxon>
        <taxon>Dikarya</taxon>
        <taxon>Ascomycota</taxon>
        <taxon>Pezizomycotina</taxon>
        <taxon>Sordariomycetes</taxon>
        <taxon>Sordariomycetidae</taxon>
        <taxon>Sordariales</taxon>
        <taxon>Podosporaceae</taxon>
        <taxon>Podospora</taxon>
    </lineage>
</organism>
<comment type="function">
    <text evidence="1">Cysteine protease that plays a key role in cytoplasm to vacuole transport (Cvt) and autophagy by mediating both proteolytic activation and delipidation of ATG8. Required for selective autophagic degradation of the nucleus (nucleophagy) as well as for mitophagy which contributes to regulate mitochondrial quantity and quality by eliminating the mitochondria to a basal level to fulfill cellular energy requirements and preventing excess ROS production. The protease activity is required for proteolytic activation of ATG8: cleaves the C-terminal amino acid of ATG8 to reveal a C-terminal glycine. ATG8 ubiquitin-like activity requires the exposure of the glycine at the C-terminus for its conjugation to phosphatidylethanolamine (PE) and its insertion to membranes, which is necessary for autophagy. The ATG8-PE conjugate mediates tethering between adjacent membranes and stimulates membrane hemifusion, leading to expansion of the autophagosomal membrane during autophagy. In addition to the protease activity, also catalyzes deconjugation of PE-conjugated forms of ATG8 during macroautophagy: ATG8 delipidation is required to release the protein from membranes, which facilitates multiple events during macroautophagy, and especially for efficient autophagosome biogenesis, the assembly of ATG9-containing tubulovesicular clusters into phagophores/autophagosomes, and for the disassembly of PAS-associated ATG components. ATG8 delipidation by ATG4 also recycles ATG8-PE generated on inappropriate membranes to maintain a reservoir of unlipidated ATG8 that is required for autophagosome formation at the PAS.</text>
</comment>
<comment type="catalytic activity">
    <reaction evidence="1">
        <text>[protein]-C-terminal L-amino acid-glycyl-phosphatidylethanolamide + H2O = [protein]-C-terminal L-amino acid-glycine + a 1,2-diacyl-sn-glycero-3-phosphoethanolamine</text>
        <dbReference type="Rhea" id="RHEA:67548"/>
        <dbReference type="Rhea" id="RHEA-COMP:17323"/>
        <dbReference type="Rhea" id="RHEA-COMP:17324"/>
        <dbReference type="ChEBI" id="CHEBI:15377"/>
        <dbReference type="ChEBI" id="CHEBI:64612"/>
        <dbReference type="ChEBI" id="CHEBI:172940"/>
        <dbReference type="ChEBI" id="CHEBI:172941"/>
    </reaction>
    <physiologicalReaction direction="left-to-right" evidence="1">
        <dbReference type="Rhea" id="RHEA:67549"/>
    </physiologicalReaction>
</comment>
<comment type="subcellular location">
    <subcellularLocation>
        <location evidence="1">Cytoplasm</location>
    </subcellularLocation>
    <subcellularLocation>
        <location evidence="1">Nucleus</location>
    </subcellularLocation>
    <subcellularLocation>
        <location evidence="1">Preautophagosomal structure</location>
    </subcellularLocation>
</comment>
<comment type="similarity">
    <text evidence="3">Belongs to the peptidase C54 family.</text>
</comment>
<keyword id="KW-0072">Autophagy</keyword>
<keyword id="KW-0963">Cytoplasm</keyword>
<keyword id="KW-0378">Hydrolase</keyword>
<keyword id="KW-0539">Nucleus</keyword>
<keyword id="KW-0645">Protease</keyword>
<keyword id="KW-0653">Protein transport</keyword>
<keyword id="KW-0788">Thiol protease</keyword>
<keyword id="KW-0813">Transport</keyword>
<proteinExistence type="inferred from homology"/>
<accession>Q86ZL5</accession>
<feature type="chain" id="PRO_0000215867" description="Probable cysteine protease ATG4">
    <location>
        <begin position="1"/>
        <end position="500"/>
    </location>
</feature>
<feature type="active site" description="Nucleophile" evidence="2">
    <location>
        <position position="228"/>
    </location>
</feature>
<feature type="active site" evidence="2">
    <location>
        <position position="393"/>
    </location>
</feature>
<feature type="active site" evidence="2">
    <location>
        <position position="395"/>
    </location>
</feature>
<dbReference type="EC" id="3.4.22.-"/>
<dbReference type="EMBL" id="BX088700">
    <property type="protein sequence ID" value="CAD60696.1"/>
    <property type="molecule type" value="Genomic_DNA"/>
</dbReference>
<dbReference type="SMR" id="Q86ZL5"/>
<dbReference type="MEROPS" id="C54.001"/>
<dbReference type="VEuPathDB" id="FungiDB:PODANS_5_5430"/>
<dbReference type="GO" id="GO:0005634">
    <property type="term" value="C:nucleus"/>
    <property type="evidence" value="ECO:0007669"/>
    <property type="project" value="UniProtKB-SubCell"/>
</dbReference>
<dbReference type="GO" id="GO:0000407">
    <property type="term" value="C:phagophore assembly site"/>
    <property type="evidence" value="ECO:0007669"/>
    <property type="project" value="UniProtKB-SubCell"/>
</dbReference>
<dbReference type="GO" id="GO:0004197">
    <property type="term" value="F:cysteine-type endopeptidase activity"/>
    <property type="evidence" value="ECO:0007669"/>
    <property type="project" value="TreeGrafter"/>
</dbReference>
<dbReference type="GO" id="GO:0019786">
    <property type="term" value="F:protein-phosphatidylethanolamide deconjugating activity"/>
    <property type="evidence" value="ECO:0007669"/>
    <property type="project" value="InterPro"/>
</dbReference>
<dbReference type="GO" id="GO:0035973">
    <property type="term" value="P:aggrephagy"/>
    <property type="evidence" value="ECO:0007669"/>
    <property type="project" value="TreeGrafter"/>
</dbReference>
<dbReference type="GO" id="GO:0000045">
    <property type="term" value="P:autophagosome assembly"/>
    <property type="evidence" value="ECO:0007669"/>
    <property type="project" value="TreeGrafter"/>
</dbReference>
<dbReference type="GO" id="GO:0000423">
    <property type="term" value="P:mitophagy"/>
    <property type="evidence" value="ECO:0007669"/>
    <property type="project" value="TreeGrafter"/>
</dbReference>
<dbReference type="GO" id="GO:0034727">
    <property type="term" value="P:piecemeal microautophagy of the nucleus"/>
    <property type="evidence" value="ECO:0007669"/>
    <property type="project" value="TreeGrafter"/>
</dbReference>
<dbReference type="GO" id="GO:0016485">
    <property type="term" value="P:protein processing"/>
    <property type="evidence" value="ECO:0007669"/>
    <property type="project" value="TreeGrafter"/>
</dbReference>
<dbReference type="GO" id="GO:0015031">
    <property type="term" value="P:protein transport"/>
    <property type="evidence" value="ECO:0007669"/>
    <property type="project" value="UniProtKB-KW"/>
</dbReference>
<dbReference type="InterPro" id="IPR038765">
    <property type="entry name" value="Papain-like_cys_pep_sf"/>
</dbReference>
<dbReference type="InterPro" id="IPR005078">
    <property type="entry name" value="Peptidase_C54"/>
</dbReference>
<dbReference type="InterPro" id="IPR046792">
    <property type="entry name" value="Peptidase_C54_cat"/>
</dbReference>
<dbReference type="PANTHER" id="PTHR22624:SF49">
    <property type="entry name" value="CYSTEINE PROTEASE"/>
    <property type="match status" value="1"/>
</dbReference>
<dbReference type="PANTHER" id="PTHR22624">
    <property type="entry name" value="CYSTEINE PROTEASE ATG4"/>
    <property type="match status" value="1"/>
</dbReference>
<dbReference type="Pfam" id="PF03416">
    <property type="entry name" value="Peptidase_C54"/>
    <property type="match status" value="1"/>
</dbReference>
<dbReference type="SUPFAM" id="SSF54001">
    <property type="entry name" value="Cysteine proteinases"/>
    <property type="match status" value="1"/>
</dbReference>
<reference key="1">
    <citation type="journal article" date="2003" name="Fungal Genet. Biol.">
        <title>Characterization of the genomic organization of the region bordering the centromere of chromosome V of Podospora anserina by direct sequencing.</title>
        <authorList>
            <person name="Silar P."/>
            <person name="Barreau C."/>
            <person name="Debuchy R."/>
            <person name="Kicka S."/>
            <person name="Turcq B."/>
            <person name="Sainsard-Chanet A."/>
            <person name="Sellem C.H."/>
            <person name="Billault A."/>
            <person name="Cattolico L."/>
            <person name="Duprat S."/>
            <person name="Weissenbach J."/>
        </authorList>
    </citation>
    <scope>NUCLEOTIDE SEQUENCE [LARGE SCALE GENOMIC DNA]</scope>
    <source>
        <strain>s</strain>
    </source>
</reference>
<sequence>MKSTRSGSNNWQSAVSGTSPKIATAMEAAISAGAEVSRVGRRILQRIWDPEPTNDRSNNEPVWCLGCSYLLDTKEYGTPPTLTTSTPPADATLTAIVPEPGAGVESEPRRATEKAGVPVNTSNAKAVAPIPVAASGQHQLQVPETPPLSVASSFDSALAYEEPGQDGGWPPAFLDDFESRIWMTYRTGFEVIPRSTDPKAAAALSFTMRFKTSFGDQTGFSSDTGWGCMIRSGQSLLANAMLISRAGRAWRRTTNPDIEREIVCLFADDPRAPYSIQNFVNHGAAACGKYPGEWFGPSATARCIHSLRVYLTRDLPEVYEDNFMSTANPDGNHFHPTLILVSTRLGIDKINPIYHEALISTLQLPQAIGIAGGRPSSSHYFIGAQGQWLFYLDPHHPRPALPYRENPNDYTIEELDSCHTRRLRHLHVEDMDPSMLIGFLIKDEDDWDLWKSSVKHVQGKAIINVSPHDPEHGMGFGRAGAIDEVETLSDEDDTDTVLDL</sequence>
<name>ATG4_PODAS</name>
<gene>
    <name type="primary">ATG4</name>
    <name type="ORF">Pa5D0009</name>
</gene>
<protein>
    <recommendedName>
        <fullName>Probable cysteine protease ATG4</fullName>
        <ecNumber>3.4.22.-</ecNumber>
    </recommendedName>
    <alternativeName>
        <fullName>Autophagy-related protein 4</fullName>
    </alternativeName>
</protein>
<evidence type="ECO:0000250" key="1">
    <source>
        <dbReference type="UniProtKB" id="P53867"/>
    </source>
</evidence>
<evidence type="ECO:0000250" key="2">
    <source>
        <dbReference type="UniProtKB" id="Q9Y4P1"/>
    </source>
</evidence>
<evidence type="ECO:0000305" key="3"/>